<accession>A3CLL8</accession>
<evidence type="ECO:0000255" key="1">
    <source>
        <dbReference type="HAMAP-Rule" id="MF_00211"/>
    </source>
</evidence>
<reference key="1">
    <citation type="journal article" date="2007" name="J. Bacteriol.">
        <title>Genome of the opportunistic pathogen Streptococcus sanguinis.</title>
        <authorList>
            <person name="Xu P."/>
            <person name="Alves J.M."/>
            <person name="Kitten T."/>
            <person name="Brown A."/>
            <person name="Chen Z."/>
            <person name="Ozaki L.S."/>
            <person name="Manque P."/>
            <person name="Ge X."/>
            <person name="Serrano M.G."/>
            <person name="Puiu D."/>
            <person name="Hendricks S."/>
            <person name="Wang Y."/>
            <person name="Chaplin M.D."/>
            <person name="Akan D."/>
            <person name="Paik S."/>
            <person name="Peterson D.L."/>
            <person name="Macrina F.L."/>
            <person name="Buck G.A."/>
        </authorList>
    </citation>
    <scope>NUCLEOTIDE SEQUENCE [LARGE SCALE GENOMIC DNA]</scope>
    <source>
        <strain>SK36</strain>
    </source>
</reference>
<sequence>MKEIIAKLADFKDLSSAEMTDVIERIVTGRVTESQIVAFLLGLKMKGETIEERTALAQVMRGHAKQIPTTIRTAMDNCGTGGDKSFSFNISTTAAFVLAGGGIKMAKHGNRSISSKSGSADVLEALGINLDLDAASLGKVFEQTGIVFLFAKNMHPAMKYIMPARLSLGIPTIMNLTGPLIHPMSLETQLLGTSRPDMLESTAEVLKNMGRKRAVVVSGPDGLDEAGLHGRTQYALLADGQISLHSFLPSDIGMEEISLEVIRGGNAKENAEILLSVLQNQASPYLETTVLNAGLGFYANGKSDSIEEGIALARQVIASGVAYEKLKQLQEYQK</sequence>
<name>TRPD_STRSV</name>
<proteinExistence type="inferred from homology"/>
<dbReference type="EC" id="2.4.2.18" evidence="1"/>
<dbReference type="EMBL" id="CP000387">
    <property type="protein sequence ID" value="ABN44073.1"/>
    <property type="molecule type" value="Genomic_DNA"/>
</dbReference>
<dbReference type="RefSeq" id="WP_002911946.1">
    <property type="nucleotide sequence ID" value="NC_009009.1"/>
</dbReference>
<dbReference type="RefSeq" id="YP_001034623.1">
    <property type="nucleotide sequence ID" value="NC_009009.1"/>
</dbReference>
<dbReference type="SMR" id="A3CLL8"/>
<dbReference type="STRING" id="388919.SSA_0634"/>
<dbReference type="KEGG" id="ssa:SSA_0634"/>
<dbReference type="PATRIC" id="fig|388919.9.peg.610"/>
<dbReference type="eggNOG" id="COG0547">
    <property type="taxonomic scope" value="Bacteria"/>
</dbReference>
<dbReference type="HOGENOM" id="CLU_034315_2_1_9"/>
<dbReference type="OrthoDB" id="9806430at2"/>
<dbReference type="UniPathway" id="UPA00035">
    <property type="reaction ID" value="UER00041"/>
</dbReference>
<dbReference type="Proteomes" id="UP000002148">
    <property type="component" value="Chromosome"/>
</dbReference>
<dbReference type="GO" id="GO:0005829">
    <property type="term" value="C:cytosol"/>
    <property type="evidence" value="ECO:0007669"/>
    <property type="project" value="TreeGrafter"/>
</dbReference>
<dbReference type="GO" id="GO:0004048">
    <property type="term" value="F:anthranilate phosphoribosyltransferase activity"/>
    <property type="evidence" value="ECO:0007669"/>
    <property type="project" value="UniProtKB-UniRule"/>
</dbReference>
<dbReference type="GO" id="GO:0000287">
    <property type="term" value="F:magnesium ion binding"/>
    <property type="evidence" value="ECO:0007669"/>
    <property type="project" value="UniProtKB-UniRule"/>
</dbReference>
<dbReference type="GO" id="GO:0000162">
    <property type="term" value="P:L-tryptophan biosynthetic process"/>
    <property type="evidence" value="ECO:0007669"/>
    <property type="project" value="UniProtKB-UniRule"/>
</dbReference>
<dbReference type="FunFam" id="3.40.1030.10:FF:000002">
    <property type="entry name" value="Anthranilate phosphoribosyltransferase"/>
    <property type="match status" value="1"/>
</dbReference>
<dbReference type="Gene3D" id="3.40.1030.10">
    <property type="entry name" value="Nucleoside phosphorylase/phosphoribosyltransferase catalytic domain"/>
    <property type="match status" value="1"/>
</dbReference>
<dbReference type="Gene3D" id="1.20.970.10">
    <property type="entry name" value="Transferase, Pyrimidine Nucleoside Phosphorylase, Chain C"/>
    <property type="match status" value="1"/>
</dbReference>
<dbReference type="HAMAP" id="MF_00211">
    <property type="entry name" value="TrpD"/>
    <property type="match status" value="1"/>
</dbReference>
<dbReference type="InterPro" id="IPR005940">
    <property type="entry name" value="Anthranilate_Pribosyl_Tfrase"/>
</dbReference>
<dbReference type="InterPro" id="IPR000312">
    <property type="entry name" value="Glycosyl_Trfase_fam3"/>
</dbReference>
<dbReference type="InterPro" id="IPR017459">
    <property type="entry name" value="Glycosyl_Trfase_fam3_N_dom"/>
</dbReference>
<dbReference type="InterPro" id="IPR036320">
    <property type="entry name" value="Glycosyl_Trfase_fam3_N_dom_sf"/>
</dbReference>
<dbReference type="InterPro" id="IPR035902">
    <property type="entry name" value="Nuc_phospho_transferase"/>
</dbReference>
<dbReference type="NCBIfam" id="TIGR01245">
    <property type="entry name" value="trpD"/>
    <property type="match status" value="1"/>
</dbReference>
<dbReference type="PANTHER" id="PTHR43285">
    <property type="entry name" value="ANTHRANILATE PHOSPHORIBOSYLTRANSFERASE"/>
    <property type="match status" value="1"/>
</dbReference>
<dbReference type="PANTHER" id="PTHR43285:SF2">
    <property type="entry name" value="ANTHRANILATE PHOSPHORIBOSYLTRANSFERASE"/>
    <property type="match status" value="1"/>
</dbReference>
<dbReference type="Pfam" id="PF02885">
    <property type="entry name" value="Glycos_trans_3N"/>
    <property type="match status" value="1"/>
</dbReference>
<dbReference type="Pfam" id="PF00591">
    <property type="entry name" value="Glycos_transf_3"/>
    <property type="match status" value="1"/>
</dbReference>
<dbReference type="SUPFAM" id="SSF52418">
    <property type="entry name" value="Nucleoside phosphorylase/phosphoribosyltransferase catalytic domain"/>
    <property type="match status" value="1"/>
</dbReference>
<dbReference type="SUPFAM" id="SSF47648">
    <property type="entry name" value="Nucleoside phosphorylase/phosphoribosyltransferase N-terminal domain"/>
    <property type="match status" value="1"/>
</dbReference>
<organism>
    <name type="scientific">Streptococcus sanguinis (strain SK36)</name>
    <dbReference type="NCBI Taxonomy" id="388919"/>
    <lineage>
        <taxon>Bacteria</taxon>
        <taxon>Bacillati</taxon>
        <taxon>Bacillota</taxon>
        <taxon>Bacilli</taxon>
        <taxon>Lactobacillales</taxon>
        <taxon>Streptococcaceae</taxon>
        <taxon>Streptococcus</taxon>
    </lineage>
</organism>
<protein>
    <recommendedName>
        <fullName evidence="1">Anthranilate phosphoribosyltransferase</fullName>
        <ecNumber evidence="1">2.4.2.18</ecNumber>
    </recommendedName>
</protein>
<feature type="chain" id="PRO_1000043074" description="Anthranilate phosphoribosyltransferase">
    <location>
        <begin position="1"/>
        <end position="334"/>
    </location>
</feature>
<feature type="binding site" evidence="1">
    <location>
        <position position="79"/>
    </location>
    <ligand>
        <name>5-phospho-alpha-D-ribose 1-diphosphate</name>
        <dbReference type="ChEBI" id="CHEBI:58017"/>
    </ligand>
</feature>
<feature type="binding site" evidence="1">
    <location>
        <position position="79"/>
    </location>
    <ligand>
        <name>anthranilate</name>
        <dbReference type="ChEBI" id="CHEBI:16567"/>
        <label>1</label>
    </ligand>
</feature>
<feature type="binding site" evidence="1">
    <location>
        <begin position="82"/>
        <end position="83"/>
    </location>
    <ligand>
        <name>5-phospho-alpha-D-ribose 1-diphosphate</name>
        <dbReference type="ChEBI" id="CHEBI:58017"/>
    </ligand>
</feature>
<feature type="binding site" evidence="1">
    <location>
        <position position="87"/>
    </location>
    <ligand>
        <name>5-phospho-alpha-D-ribose 1-diphosphate</name>
        <dbReference type="ChEBI" id="CHEBI:58017"/>
    </ligand>
</feature>
<feature type="binding site" evidence="1">
    <location>
        <begin position="89"/>
        <end position="92"/>
    </location>
    <ligand>
        <name>5-phospho-alpha-D-ribose 1-diphosphate</name>
        <dbReference type="ChEBI" id="CHEBI:58017"/>
    </ligand>
</feature>
<feature type="binding site" evidence="1">
    <location>
        <position position="91"/>
    </location>
    <ligand>
        <name>Mg(2+)</name>
        <dbReference type="ChEBI" id="CHEBI:18420"/>
        <label>1</label>
    </ligand>
</feature>
<feature type="binding site" evidence="1">
    <location>
        <begin position="107"/>
        <end position="115"/>
    </location>
    <ligand>
        <name>5-phospho-alpha-D-ribose 1-diphosphate</name>
        <dbReference type="ChEBI" id="CHEBI:58017"/>
    </ligand>
</feature>
<feature type="binding site" evidence="1">
    <location>
        <position position="110"/>
    </location>
    <ligand>
        <name>anthranilate</name>
        <dbReference type="ChEBI" id="CHEBI:16567"/>
        <label>1</label>
    </ligand>
</feature>
<feature type="binding site" evidence="1">
    <location>
        <position position="119"/>
    </location>
    <ligand>
        <name>5-phospho-alpha-D-ribose 1-diphosphate</name>
        <dbReference type="ChEBI" id="CHEBI:58017"/>
    </ligand>
</feature>
<feature type="binding site" evidence="1">
    <location>
        <position position="165"/>
    </location>
    <ligand>
        <name>anthranilate</name>
        <dbReference type="ChEBI" id="CHEBI:16567"/>
        <label>2</label>
    </ligand>
</feature>
<feature type="binding site" evidence="1">
    <location>
        <position position="224"/>
    </location>
    <ligand>
        <name>Mg(2+)</name>
        <dbReference type="ChEBI" id="CHEBI:18420"/>
        <label>2</label>
    </ligand>
</feature>
<feature type="binding site" evidence="1">
    <location>
        <position position="225"/>
    </location>
    <ligand>
        <name>Mg(2+)</name>
        <dbReference type="ChEBI" id="CHEBI:18420"/>
        <label>1</label>
    </ligand>
</feature>
<feature type="binding site" evidence="1">
    <location>
        <position position="225"/>
    </location>
    <ligand>
        <name>Mg(2+)</name>
        <dbReference type="ChEBI" id="CHEBI:18420"/>
        <label>2</label>
    </ligand>
</feature>
<comment type="function">
    <text evidence="1">Catalyzes the transfer of the phosphoribosyl group of 5-phosphorylribose-1-pyrophosphate (PRPP) to anthranilate to yield N-(5'-phosphoribosyl)-anthranilate (PRA).</text>
</comment>
<comment type="catalytic activity">
    <reaction evidence="1">
        <text>N-(5-phospho-beta-D-ribosyl)anthranilate + diphosphate = 5-phospho-alpha-D-ribose 1-diphosphate + anthranilate</text>
        <dbReference type="Rhea" id="RHEA:11768"/>
        <dbReference type="ChEBI" id="CHEBI:16567"/>
        <dbReference type="ChEBI" id="CHEBI:18277"/>
        <dbReference type="ChEBI" id="CHEBI:33019"/>
        <dbReference type="ChEBI" id="CHEBI:58017"/>
        <dbReference type="EC" id="2.4.2.18"/>
    </reaction>
</comment>
<comment type="cofactor">
    <cofactor evidence="1">
        <name>Mg(2+)</name>
        <dbReference type="ChEBI" id="CHEBI:18420"/>
    </cofactor>
    <text evidence="1">Binds 2 magnesium ions per monomer.</text>
</comment>
<comment type="pathway">
    <text evidence="1">Amino-acid biosynthesis; L-tryptophan biosynthesis; L-tryptophan from chorismate: step 2/5.</text>
</comment>
<comment type="subunit">
    <text evidence="1">Homodimer.</text>
</comment>
<comment type="similarity">
    <text evidence="1">Belongs to the anthranilate phosphoribosyltransferase family.</text>
</comment>
<gene>
    <name evidence="1" type="primary">trpD</name>
    <name type="ordered locus">SSA_0634</name>
</gene>
<keyword id="KW-0028">Amino-acid biosynthesis</keyword>
<keyword id="KW-0057">Aromatic amino acid biosynthesis</keyword>
<keyword id="KW-0328">Glycosyltransferase</keyword>
<keyword id="KW-0460">Magnesium</keyword>
<keyword id="KW-0479">Metal-binding</keyword>
<keyword id="KW-1185">Reference proteome</keyword>
<keyword id="KW-0808">Transferase</keyword>
<keyword id="KW-0822">Tryptophan biosynthesis</keyword>